<comment type="function">
    <text evidence="1">Catalyzes the decarboxylation of four acetate groups of uroporphyrinogen-III to yield coproporphyrinogen-III.</text>
</comment>
<comment type="catalytic activity">
    <reaction evidence="1">
        <text>uroporphyrinogen III + 4 H(+) = coproporphyrinogen III + 4 CO2</text>
        <dbReference type="Rhea" id="RHEA:19865"/>
        <dbReference type="ChEBI" id="CHEBI:15378"/>
        <dbReference type="ChEBI" id="CHEBI:16526"/>
        <dbReference type="ChEBI" id="CHEBI:57308"/>
        <dbReference type="ChEBI" id="CHEBI:57309"/>
        <dbReference type="EC" id="4.1.1.37"/>
    </reaction>
</comment>
<comment type="pathway">
    <text evidence="1">Porphyrin-containing compound metabolism; protoporphyrin-IX biosynthesis; coproporphyrinogen-III from 5-aminolevulinate: step 4/4.</text>
</comment>
<comment type="subunit">
    <text evidence="1">Homodimer.</text>
</comment>
<comment type="subcellular location">
    <subcellularLocation>
        <location evidence="1">Cytoplasm</location>
    </subcellularLocation>
</comment>
<comment type="similarity">
    <text evidence="1">Belongs to the uroporphyrinogen decarboxylase family.</text>
</comment>
<reference key="1">
    <citation type="journal article" date="2009" name="Proc. Natl. Acad. Sci. U.S.A.">
        <title>The genomic basis of trophic strategy in marine bacteria.</title>
        <authorList>
            <person name="Lauro F.M."/>
            <person name="McDougald D."/>
            <person name="Thomas T."/>
            <person name="Williams T.J."/>
            <person name="Egan S."/>
            <person name="Rice S."/>
            <person name="DeMaere M.Z."/>
            <person name="Ting L."/>
            <person name="Ertan H."/>
            <person name="Johnson J."/>
            <person name="Ferriera S."/>
            <person name="Lapidus A."/>
            <person name="Anderson I."/>
            <person name="Kyrpides N."/>
            <person name="Munk A.C."/>
            <person name="Detter C."/>
            <person name="Han C.S."/>
            <person name="Brown M.V."/>
            <person name="Robb F.T."/>
            <person name="Kjelleberg S."/>
            <person name="Cavicchioli R."/>
        </authorList>
    </citation>
    <scope>NUCLEOTIDE SEQUENCE [LARGE SCALE GENOMIC DNA]</scope>
    <source>
        <strain>DSM 13593 / LMG 18877 / RB2256</strain>
    </source>
</reference>
<accession>Q1GP74</accession>
<evidence type="ECO:0000255" key="1">
    <source>
        <dbReference type="HAMAP-Rule" id="MF_00218"/>
    </source>
</evidence>
<proteinExistence type="inferred from homology"/>
<feature type="chain" id="PRO_0000325698" description="Uroporphyrinogen decarboxylase">
    <location>
        <begin position="1"/>
        <end position="342"/>
    </location>
</feature>
<feature type="binding site" evidence="1">
    <location>
        <begin position="26"/>
        <end position="30"/>
    </location>
    <ligand>
        <name>substrate</name>
    </ligand>
</feature>
<feature type="binding site" evidence="1">
    <location>
        <position position="76"/>
    </location>
    <ligand>
        <name>substrate</name>
    </ligand>
</feature>
<feature type="binding site" evidence="1">
    <location>
        <position position="150"/>
    </location>
    <ligand>
        <name>substrate</name>
    </ligand>
</feature>
<feature type="binding site" evidence="1">
    <location>
        <position position="205"/>
    </location>
    <ligand>
        <name>substrate</name>
    </ligand>
</feature>
<feature type="binding site" evidence="1">
    <location>
        <position position="321"/>
    </location>
    <ligand>
        <name>substrate</name>
    </ligand>
</feature>
<feature type="site" description="Transition state stabilizer" evidence="1">
    <location>
        <position position="76"/>
    </location>
</feature>
<sequence length="342" mass="36408">MKASPKKLLATLRGARHERTPLWLMRQAGRYLPEYRALRESKGGFLELCYDPEAAAEVTLQPIRRFGFDGAILFSDILVIPHALGQHLWFEAGEGPRLAPPLVDGALASLEAAPQRLDPVYATVARVAASLPPETTFLGFAGSPWTVATYMVAGRGSKDQAAARRMAFADPAAFGAIIDAIADLTVTYLSGQIEQGVDAVQLFDSWAGSLSPAQFEQWVIAPNAGIVRRLKALHPDTPVIGFPKGAGGKLRAYAEETGVDAIGLDETVDPTWADAALPSQLPVQGNLDPLALVAGGAALDAAIDRILAAFPSRPHIFNLGHGIVPDTPVAHVEHLIKRVRGG</sequence>
<name>DCUP_SPHAL</name>
<keyword id="KW-0963">Cytoplasm</keyword>
<keyword id="KW-0210">Decarboxylase</keyword>
<keyword id="KW-0456">Lyase</keyword>
<keyword id="KW-0627">Porphyrin biosynthesis</keyword>
<keyword id="KW-1185">Reference proteome</keyword>
<dbReference type="EC" id="4.1.1.37" evidence="1"/>
<dbReference type="EMBL" id="CP000356">
    <property type="protein sequence ID" value="ABF54548.1"/>
    <property type="molecule type" value="Genomic_DNA"/>
</dbReference>
<dbReference type="RefSeq" id="WP_011543112.1">
    <property type="nucleotide sequence ID" value="NC_008048.1"/>
</dbReference>
<dbReference type="SMR" id="Q1GP74"/>
<dbReference type="STRING" id="317655.Sala_2843"/>
<dbReference type="KEGG" id="sal:Sala_2843"/>
<dbReference type="eggNOG" id="COG0407">
    <property type="taxonomic scope" value="Bacteria"/>
</dbReference>
<dbReference type="HOGENOM" id="CLU_040933_0_0_5"/>
<dbReference type="OrthoDB" id="9806656at2"/>
<dbReference type="UniPathway" id="UPA00251">
    <property type="reaction ID" value="UER00321"/>
</dbReference>
<dbReference type="Proteomes" id="UP000006578">
    <property type="component" value="Chromosome"/>
</dbReference>
<dbReference type="GO" id="GO:0005829">
    <property type="term" value="C:cytosol"/>
    <property type="evidence" value="ECO:0007669"/>
    <property type="project" value="TreeGrafter"/>
</dbReference>
<dbReference type="GO" id="GO:0004853">
    <property type="term" value="F:uroporphyrinogen decarboxylase activity"/>
    <property type="evidence" value="ECO:0007669"/>
    <property type="project" value="UniProtKB-UniRule"/>
</dbReference>
<dbReference type="GO" id="GO:0019353">
    <property type="term" value="P:protoporphyrinogen IX biosynthetic process from glutamate"/>
    <property type="evidence" value="ECO:0007669"/>
    <property type="project" value="TreeGrafter"/>
</dbReference>
<dbReference type="CDD" id="cd00717">
    <property type="entry name" value="URO-D"/>
    <property type="match status" value="1"/>
</dbReference>
<dbReference type="Gene3D" id="3.20.20.210">
    <property type="match status" value="1"/>
</dbReference>
<dbReference type="HAMAP" id="MF_00218">
    <property type="entry name" value="URO_D"/>
    <property type="match status" value="1"/>
</dbReference>
<dbReference type="InterPro" id="IPR038071">
    <property type="entry name" value="UROD/MetE-like_sf"/>
</dbReference>
<dbReference type="InterPro" id="IPR006361">
    <property type="entry name" value="Uroporphyrinogen_deCO2ase_HemE"/>
</dbReference>
<dbReference type="InterPro" id="IPR000257">
    <property type="entry name" value="Uroporphyrinogen_deCOase"/>
</dbReference>
<dbReference type="NCBIfam" id="TIGR01464">
    <property type="entry name" value="hemE"/>
    <property type="match status" value="1"/>
</dbReference>
<dbReference type="PANTHER" id="PTHR21091">
    <property type="entry name" value="METHYLTETRAHYDROFOLATE:HOMOCYSTEINE METHYLTRANSFERASE RELATED"/>
    <property type="match status" value="1"/>
</dbReference>
<dbReference type="PANTHER" id="PTHR21091:SF169">
    <property type="entry name" value="UROPORPHYRINOGEN DECARBOXYLASE"/>
    <property type="match status" value="1"/>
</dbReference>
<dbReference type="Pfam" id="PF01208">
    <property type="entry name" value="URO-D"/>
    <property type="match status" value="1"/>
</dbReference>
<dbReference type="SUPFAM" id="SSF51726">
    <property type="entry name" value="UROD/MetE-like"/>
    <property type="match status" value="1"/>
</dbReference>
<dbReference type="PROSITE" id="PS00906">
    <property type="entry name" value="UROD_1"/>
    <property type="match status" value="1"/>
</dbReference>
<dbReference type="PROSITE" id="PS00907">
    <property type="entry name" value="UROD_2"/>
    <property type="match status" value="1"/>
</dbReference>
<gene>
    <name evidence="1" type="primary">hemE</name>
    <name type="ordered locus">Sala_2843</name>
</gene>
<organism>
    <name type="scientific">Sphingopyxis alaskensis (strain DSM 13593 / LMG 18877 / RB2256)</name>
    <name type="common">Sphingomonas alaskensis</name>
    <dbReference type="NCBI Taxonomy" id="317655"/>
    <lineage>
        <taxon>Bacteria</taxon>
        <taxon>Pseudomonadati</taxon>
        <taxon>Pseudomonadota</taxon>
        <taxon>Alphaproteobacteria</taxon>
        <taxon>Sphingomonadales</taxon>
        <taxon>Sphingomonadaceae</taxon>
        <taxon>Sphingopyxis</taxon>
    </lineage>
</organism>
<protein>
    <recommendedName>
        <fullName evidence="1">Uroporphyrinogen decarboxylase</fullName>
        <shortName evidence="1">UPD</shortName>
        <shortName evidence="1">URO-D</shortName>
        <ecNumber evidence="1">4.1.1.37</ecNumber>
    </recommendedName>
</protein>